<gene>
    <name evidence="1" type="primary">rpsF</name>
    <name type="ordered locus">SAV0365</name>
</gene>
<accession>P66595</accession>
<accession>Q99WL2</accession>
<dbReference type="EMBL" id="BA000017">
    <property type="protein sequence ID" value="BAB56527.1"/>
    <property type="molecule type" value="Genomic_DNA"/>
</dbReference>
<dbReference type="RefSeq" id="WP_001261460.1">
    <property type="nucleotide sequence ID" value="NC_002758.2"/>
</dbReference>
<dbReference type="SMR" id="P66595"/>
<dbReference type="GeneID" id="98344691"/>
<dbReference type="KEGG" id="sav:SAV0365"/>
<dbReference type="HOGENOM" id="CLU_113441_5_3_9"/>
<dbReference type="PhylomeDB" id="P66595"/>
<dbReference type="Proteomes" id="UP000002481">
    <property type="component" value="Chromosome"/>
</dbReference>
<dbReference type="GO" id="GO:0005737">
    <property type="term" value="C:cytoplasm"/>
    <property type="evidence" value="ECO:0007669"/>
    <property type="project" value="UniProtKB-ARBA"/>
</dbReference>
<dbReference type="GO" id="GO:1990904">
    <property type="term" value="C:ribonucleoprotein complex"/>
    <property type="evidence" value="ECO:0007669"/>
    <property type="project" value="UniProtKB-KW"/>
</dbReference>
<dbReference type="GO" id="GO:0005840">
    <property type="term" value="C:ribosome"/>
    <property type="evidence" value="ECO:0007669"/>
    <property type="project" value="UniProtKB-KW"/>
</dbReference>
<dbReference type="GO" id="GO:0070181">
    <property type="term" value="F:small ribosomal subunit rRNA binding"/>
    <property type="evidence" value="ECO:0007669"/>
    <property type="project" value="TreeGrafter"/>
</dbReference>
<dbReference type="GO" id="GO:0003735">
    <property type="term" value="F:structural constituent of ribosome"/>
    <property type="evidence" value="ECO:0007669"/>
    <property type="project" value="InterPro"/>
</dbReference>
<dbReference type="GO" id="GO:0006412">
    <property type="term" value="P:translation"/>
    <property type="evidence" value="ECO:0007669"/>
    <property type="project" value="UniProtKB-UniRule"/>
</dbReference>
<dbReference type="CDD" id="cd00473">
    <property type="entry name" value="bS6"/>
    <property type="match status" value="1"/>
</dbReference>
<dbReference type="FunFam" id="3.30.70.60:FF:000002">
    <property type="entry name" value="30S ribosomal protein S6"/>
    <property type="match status" value="1"/>
</dbReference>
<dbReference type="Gene3D" id="3.30.70.60">
    <property type="match status" value="1"/>
</dbReference>
<dbReference type="HAMAP" id="MF_00360">
    <property type="entry name" value="Ribosomal_bS6"/>
    <property type="match status" value="1"/>
</dbReference>
<dbReference type="InterPro" id="IPR000529">
    <property type="entry name" value="Ribosomal_bS6"/>
</dbReference>
<dbReference type="InterPro" id="IPR020815">
    <property type="entry name" value="Ribosomal_bS6_CS"/>
</dbReference>
<dbReference type="InterPro" id="IPR035980">
    <property type="entry name" value="Ribosomal_bS6_sf"/>
</dbReference>
<dbReference type="InterPro" id="IPR020814">
    <property type="entry name" value="Ribosomal_S6_plastid/chlpt"/>
</dbReference>
<dbReference type="InterPro" id="IPR014717">
    <property type="entry name" value="Transl_elong_EF1B/ribsomal_bS6"/>
</dbReference>
<dbReference type="NCBIfam" id="TIGR00166">
    <property type="entry name" value="S6"/>
    <property type="match status" value="1"/>
</dbReference>
<dbReference type="PANTHER" id="PTHR21011">
    <property type="entry name" value="MITOCHONDRIAL 28S RIBOSOMAL PROTEIN S6"/>
    <property type="match status" value="1"/>
</dbReference>
<dbReference type="PANTHER" id="PTHR21011:SF1">
    <property type="entry name" value="SMALL RIBOSOMAL SUBUNIT PROTEIN BS6M"/>
    <property type="match status" value="1"/>
</dbReference>
<dbReference type="Pfam" id="PF01250">
    <property type="entry name" value="Ribosomal_S6"/>
    <property type="match status" value="1"/>
</dbReference>
<dbReference type="SUPFAM" id="SSF54995">
    <property type="entry name" value="Ribosomal protein S6"/>
    <property type="match status" value="1"/>
</dbReference>
<dbReference type="PROSITE" id="PS01048">
    <property type="entry name" value="RIBOSOMAL_S6"/>
    <property type="match status" value="1"/>
</dbReference>
<reference key="1">
    <citation type="journal article" date="2001" name="Lancet">
        <title>Whole genome sequencing of meticillin-resistant Staphylococcus aureus.</title>
        <authorList>
            <person name="Kuroda M."/>
            <person name="Ohta T."/>
            <person name="Uchiyama I."/>
            <person name="Baba T."/>
            <person name="Yuzawa H."/>
            <person name="Kobayashi I."/>
            <person name="Cui L."/>
            <person name="Oguchi A."/>
            <person name="Aoki K."/>
            <person name="Nagai Y."/>
            <person name="Lian J.-Q."/>
            <person name="Ito T."/>
            <person name="Kanamori M."/>
            <person name="Matsumaru H."/>
            <person name="Maruyama A."/>
            <person name="Murakami H."/>
            <person name="Hosoyama A."/>
            <person name="Mizutani-Ui Y."/>
            <person name="Takahashi N.K."/>
            <person name="Sawano T."/>
            <person name="Inoue R."/>
            <person name="Kaito C."/>
            <person name="Sekimizu K."/>
            <person name="Hirakawa H."/>
            <person name="Kuhara S."/>
            <person name="Goto S."/>
            <person name="Yabuzaki J."/>
            <person name="Kanehisa M."/>
            <person name="Yamashita A."/>
            <person name="Oshima K."/>
            <person name="Furuya K."/>
            <person name="Yoshino C."/>
            <person name="Shiba T."/>
            <person name="Hattori M."/>
            <person name="Ogasawara N."/>
            <person name="Hayashi H."/>
            <person name="Hiramatsu K."/>
        </authorList>
    </citation>
    <scope>NUCLEOTIDE SEQUENCE [LARGE SCALE GENOMIC DNA]</scope>
    <source>
        <strain>Mu50 / ATCC 700699</strain>
    </source>
</reference>
<feature type="chain" id="PRO_0000176836" description="Small ribosomal subunit protein bS6">
    <location>
        <begin position="1"/>
        <end position="98"/>
    </location>
</feature>
<sequence>MRTYEVMYIVRPNIEEDAKKALVERFNGILATEGAEVLEAKDWGKRRLAYEINDFKDGFYNIVRVKSDNNKATDEFQRLAKISDDIIRYMVIREDEDK</sequence>
<name>RS6_STAAM</name>
<proteinExistence type="inferred from homology"/>
<organism>
    <name type="scientific">Staphylococcus aureus (strain Mu50 / ATCC 700699)</name>
    <dbReference type="NCBI Taxonomy" id="158878"/>
    <lineage>
        <taxon>Bacteria</taxon>
        <taxon>Bacillati</taxon>
        <taxon>Bacillota</taxon>
        <taxon>Bacilli</taxon>
        <taxon>Bacillales</taxon>
        <taxon>Staphylococcaceae</taxon>
        <taxon>Staphylococcus</taxon>
    </lineage>
</organism>
<keyword id="KW-0687">Ribonucleoprotein</keyword>
<keyword id="KW-0689">Ribosomal protein</keyword>
<keyword id="KW-0694">RNA-binding</keyword>
<keyword id="KW-0699">rRNA-binding</keyword>
<comment type="function">
    <text evidence="1">Binds together with bS18 to 16S ribosomal RNA.</text>
</comment>
<comment type="similarity">
    <text evidence="1">Belongs to the bacterial ribosomal protein bS6 family.</text>
</comment>
<evidence type="ECO:0000255" key="1">
    <source>
        <dbReference type="HAMAP-Rule" id="MF_00360"/>
    </source>
</evidence>
<evidence type="ECO:0000305" key="2"/>
<protein>
    <recommendedName>
        <fullName evidence="1">Small ribosomal subunit protein bS6</fullName>
    </recommendedName>
    <alternativeName>
        <fullName evidence="2">30S ribosomal protein S6</fullName>
    </alternativeName>
</protein>